<protein>
    <recommendedName>
        <fullName evidence="1">RNA 3'-terminal phosphate cyclase</fullName>
        <shortName evidence="1">RNA cyclase</shortName>
        <shortName evidence="1">RNA-3'-phosphate cyclase</shortName>
        <ecNumber evidence="1">6.5.1.4</ecNumber>
    </recommendedName>
</protein>
<feature type="chain" id="PRO_1000099350" description="RNA 3'-terminal phosphate cyclase">
    <location>
        <begin position="1"/>
        <end position="348"/>
    </location>
</feature>
<feature type="active site" description="Tele-AMP-histidine intermediate" evidence="1">
    <location>
        <position position="316"/>
    </location>
</feature>
<feature type="binding site" evidence="1">
    <location>
        <position position="107"/>
    </location>
    <ligand>
        <name>ATP</name>
        <dbReference type="ChEBI" id="CHEBI:30616"/>
    </ligand>
</feature>
<feature type="binding site" evidence="1">
    <location>
        <begin position="290"/>
        <end position="294"/>
    </location>
    <ligand>
        <name>ATP</name>
        <dbReference type="ChEBI" id="CHEBI:30616"/>
    </ligand>
</feature>
<proteinExistence type="inferred from homology"/>
<dbReference type="EC" id="6.5.1.4" evidence="1"/>
<dbReference type="EMBL" id="CP001037">
    <property type="protein sequence ID" value="ACC81452.1"/>
    <property type="molecule type" value="Genomic_DNA"/>
</dbReference>
<dbReference type="RefSeq" id="WP_012409443.1">
    <property type="nucleotide sequence ID" value="NC_010628.1"/>
</dbReference>
<dbReference type="SMR" id="B2IWJ8"/>
<dbReference type="STRING" id="63737.Npun_F2920"/>
<dbReference type="EnsemblBacteria" id="ACC81452">
    <property type="protein sequence ID" value="ACC81452"/>
    <property type="gene ID" value="Npun_F2920"/>
</dbReference>
<dbReference type="KEGG" id="npu:Npun_F2920"/>
<dbReference type="eggNOG" id="COG0430">
    <property type="taxonomic scope" value="Bacteria"/>
</dbReference>
<dbReference type="HOGENOM" id="CLU_027882_0_0_3"/>
<dbReference type="OrthoDB" id="9789235at2"/>
<dbReference type="PhylomeDB" id="B2IWJ8"/>
<dbReference type="Proteomes" id="UP000001191">
    <property type="component" value="Chromosome"/>
</dbReference>
<dbReference type="GO" id="GO:0005737">
    <property type="term" value="C:cytoplasm"/>
    <property type="evidence" value="ECO:0007669"/>
    <property type="project" value="UniProtKB-SubCell"/>
</dbReference>
<dbReference type="GO" id="GO:0005524">
    <property type="term" value="F:ATP binding"/>
    <property type="evidence" value="ECO:0007669"/>
    <property type="project" value="UniProtKB-KW"/>
</dbReference>
<dbReference type="GO" id="GO:0003963">
    <property type="term" value="F:RNA-3'-phosphate cyclase activity"/>
    <property type="evidence" value="ECO:0007669"/>
    <property type="project" value="UniProtKB-UniRule"/>
</dbReference>
<dbReference type="GO" id="GO:0006396">
    <property type="term" value="P:RNA processing"/>
    <property type="evidence" value="ECO:0007669"/>
    <property type="project" value="InterPro"/>
</dbReference>
<dbReference type="CDD" id="cd00874">
    <property type="entry name" value="RNA_Cyclase_Class_II"/>
    <property type="match status" value="1"/>
</dbReference>
<dbReference type="Gene3D" id="3.65.10.20">
    <property type="entry name" value="RNA 3'-terminal phosphate cyclase domain"/>
    <property type="match status" value="1"/>
</dbReference>
<dbReference type="Gene3D" id="3.30.360.20">
    <property type="entry name" value="RNA 3'-terminal phosphate cyclase, insert domain"/>
    <property type="match status" value="1"/>
</dbReference>
<dbReference type="HAMAP" id="MF_00200">
    <property type="entry name" value="RTC"/>
    <property type="match status" value="1"/>
</dbReference>
<dbReference type="InterPro" id="IPR013791">
    <property type="entry name" value="RNA3'-term_phos_cycl_insert"/>
</dbReference>
<dbReference type="InterPro" id="IPR023797">
    <property type="entry name" value="RNA3'_phos_cyclase_dom"/>
</dbReference>
<dbReference type="InterPro" id="IPR037136">
    <property type="entry name" value="RNA3'_phos_cyclase_dom_sf"/>
</dbReference>
<dbReference type="InterPro" id="IPR000228">
    <property type="entry name" value="RNA3'_term_phos_cyc"/>
</dbReference>
<dbReference type="InterPro" id="IPR017770">
    <property type="entry name" value="RNA3'_term_phos_cyc_type_1"/>
</dbReference>
<dbReference type="InterPro" id="IPR013792">
    <property type="entry name" value="RNA3'P_cycl/enolpyr_Trfase_a/b"/>
</dbReference>
<dbReference type="InterPro" id="IPR036553">
    <property type="entry name" value="RPTC_insert"/>
</dbReference>
<dbReference type="NCBIfam" id="NF003246">
    <property type="entry name" value="PRK04204.1-2"/>
    <property type="match status" value="1"/>
</dbReference>
<dbReference type="NCBIfam" id="TIGR03399">
    <property type="entry name" value="RNA_3prim_cycl"/>
    <property type="match status" value="1"/>
</dbReference>
<dbReference type="PANTHER" id="PTHR11096">
    <property type="entry name" value="RNA 3' TERMINAL PHOSPHATE CYCLASE"/>
    <property type="match status" value="1"/>
</dbReference>
<dbReference type="PANTHER" id="PTHR11096:SF0">
    <property type="entry name" value="RNA 3'-TERMINAL PHOSPHATE CYCLASE"/>
    <property type="match status" value="1"/>
</dbReference>
<dbReference type="Pfam" id="PF01137">
    <property type="entry name" value="RTC"/>
    <property type="match status" value="1"/>
</dbReference>
<dbReference type="Pfam" id="PF05189">
    <property type="entry name" value="RTC_insert"/>
    <property type="match status" value="1"/>
</dbReference>
<dbReference type="PIRSF" id="PIRSF005378">
    <property type="entry name" value="RNA3'_term_phos_cycl_euk"/>
    <property type="match status" value="1"/>
</dbReference>
<dbReference type="SUPFAM" id="SSF55205">
    <property type="entry name" value="EPT/RTPC-like"/>
    <property type="match status" value="1"/>
</dbReference>
<dbReference type="SUPFAM" id="SSF52913">
    <property type="entry name" value="RNA 3'-terminal phosphate cyclase, RPTC, insert domain"/>
    <property type="match status" value="1"/>
</dbReference>
<gene>
    <name evidence="1" type="primary">rtcA</name>
    <name type="ordered locus">Npun_F2920</name>
</gene>
<sequence length="348" mass="36859">MIEIDGSYGEGGGQVLRTSLSLAAITGEPIRIAGIRAGRKKPGLAAQHLTAVRAAGRICNAQLRGDALGSMLLEFIPGSAVQAGIYTFDVSKAQEGGSAGAIALVLQTILLPLALATGNSQVTLKGGTHVNFSPTVTYIEQVYLPILQRMGVEAQVKLGAWGWFPQGGGEIELQVIGGTQLGGINLLERGELQQVRGIAAVTELPSHIPQRMANRAENLLREAHLKVRVQTLREKGVAPGAGIFLTAEYQNSLTGFGGFGRLRLSAETVAEIACQQLLEFHYTGAAVDEHLADQLLLPATLASQESQYQVAEVSRHLITNAAVIEQFGLAQIRVNEADKIVSVKSLTS</sequence>
<reference key="1">
    <citation type="journal article" date="2013" name="Plant Physiol.">
        <title>A Nostoc punctiforme Sugar Transporter Necessary to Establish a Cyanobacterium-Plant Symbiosis.</title>
        <authorList>
            <person name="Ekman M."/>
            <person name="Picossi S."/>
            <person name="Campbell E.L."/>
            <person name="Meeks J.C."/>
            <person name="Flores E."/>
        </authorList>
    </citation>
    <scope>NUCLEOTIDE SEQUENCE [LARGE SCALE GENOMIC DNA]</scope>
    <source>
        <strain>ATCC 29133 / PCC 73102</strain>
    </source>
</reference>
<evidence type="ECO:0000255" key="1">
    <source>
        <dbReference type="HAMAP-Rule" id="MF_00200"/>
    </source>
</evidence>
<comment type="function">
    <text evidence="1">Catalyzes the conversion of 3'-phosphate to a 2',3'-cyclic phosphodiester at the end of RNA. The mechanism of action of the enzyme occurs in 3 steps: (A) adenylation of the enzyme by ATP; (B) transfer of adenylate to an RNA-N3'P to produce RNA-N3'PP5'A; (C) and attack of the adjacent 2'-hydroxyl on the 3'-phosphorus in the diester linkage to produce the cyclic end product. The biological role of this enzyme is unknown but it is likely to function in some aspects of cellular RNA processing.</text>
</comment>
<comment type="catalytic activity">
    <reaction evidence="1">
        <text>a 3'-end 3'-phospho-ribonucleotide-RNA + ATP = a 3'-end 2',3'-cyclophospho-ribonucleotide-RNA + AMP + diphosphate</text>
        <dbReference type="Rhea" id="RHEA:23976"/>
        <dbReference type="Rhea" id="RHEA-COMP:10463"/>
        <dbReference type="Rhea" id="RHEA-COMP:10464"/>
        <dbReference type="ChEBI" id="CHEBI:30616"/>
        <dbReference type="ChEBI" id="CHEBI:33019"/>
        <dbReference type="ChEBI" id="CHEBI:83062"/>
        <dbReference type="ChEBI" id="CHEBI:83064"/>
        <dbReference type="ChEBI" id="CHEBI:456215"/>
        <dbReference type="EC" id="6.5.1.4"/>
    </reaction>
</comment>
<comment type="subcellular location">
    <subcellularLocation>
        <location evidence="1">Cytoplasm</location>
    </subcellularLocation>
</comment>
<comment type="similarity">
    <text evidence="1">Belongs to the RNA 3'-terminal cyclase family. Type 1 subfamily.</text>
</comment>
<keyword id="KW-0067">ATP-binding</keyword>
<keyword id="KW-0963">Cytoplasm</keyword>
<keyword id="KW-0436">Ligase</keyword>
<keyword id="KW-0547">Nucleotide-binding</keyword>
<keyword id="KW-1185">Reference proteome</keyword>
<accession>B2IWJ8</accession>
<name>RTCA_NOSP7</name>
<organism>
    <name type="scientific">Nostoc punctiforme (strain ATCC 29133 / PCC 73102)</name>
    <dbReference type="NCBI Taxonomy" id="63737"/>
    <lineage>
        <taxon>Bacteria</taxon>
        <taxon>Bacillati</taxon>
        <taxon>Cyanobacteriota</taxon>
        <taxon>Cyanophyceae</taxon>
        <taxon>Nostocales</taxon>
        <taxon>Nostocaceae</taxon>
        <taxon>Nostoc</taxon>
    </lineage>
</organism>